<protein>
    <recommendedName>
        <fullName evidence="11">Acetate transporter protein patA</fullName>
    </recommendedName>
    <alternativeName>
        <fullName evidence="11">Patulin biosynthesis cluster protein A</fullName>
    </alternativeName>
</protein>
<dbReference type="EMBL" id="KF899892">
    <property type="protein sequence ID" value="AIG62139.1"/>
    <property type="molecule type" value="Genomic_DNA"/>
</dbReference>
<dbReference type="EMBL" id="JQFZ01000262">
    <property type="protein sequence ID" value="KGO52634.1"/>
    <property type="molecule type" value="Genomic_DNA"/>
</dbReference>
<dbReference type="RefSeq" id="XP_016595364.1">
    <property type="nucleotide sequence ID" value="XM_016745551.1"/>
</dbReference>
<dbReference type="SMR" id="A0A075TRL0"/>
<dbReference type="GeneID" id="27680971"/>
<dbReference type="VEuPathDB" id="FungiDB:PEXP_094390"/>
<dbReference type="HOGENOM" id="CLU_051062_2_1_1"/>
<dbReference type="OrthoDB" id="3648309at2759"/>
<dbReference type="PhylomeDB" id="A0A075TRL0"/>
<dbReference type="UniPathway" id="UPA00918"/>
<dbReference type="Proteomes" id="UP000030143">
    <property type="component" value="Unassembled WGS sequence"/>
</dbReference>
<dbReference type="GO" id="GO:0005789">
    <property type="term" value="C:endoplasmic reticulum membrane"/>
    <property type="evidence" value="ECO:0000314"/>
    <property type="project" value="GO_Central"/>
</dbReference>
<dbReference type="GO" id="GO:0005886">
    <property type="term" value="C:plasma membrane"/>
    <property type="evidence" value="ECO:0007669"/>
    <property type="project" value="TreeGrafter"/>
</dbReference>
<dbReference type="GO" id="GO:0015123">
    <property type="term" value="F:acetate transmembrane transporter activity"/>
    <property type="evidence" value="ECO:0007669"/>
    <property type="project" value="TreeGrafter"/>
</dbReference>
<dbReference type="GO" id="GO:0140723">
    <property type="term" value="P:patulin biosynthetic process"/>
    <property type="evidence" value="ECO:0000315"/>
    <property type="project" value="GO_Central"/>
</dbReference>
<dbReference type="InterPro" id="IPR051633">
    <property type="entry name" value="AceTr"/>
</dbReference>
<dbReference type="InterPro" id="IPR000791">
    <property type="entry name" value="Gpr1/Fun34/SatP-like"/>
</dbReference>
<dbReference type="PANTHER" id="PTHR31123">
    <property type="entry name" value="ACCUMULATION OF DYADS PROTEIN 2-RELATED"/>
    <property type="match status" value="1"/>
</dbReference>
<dbReference type="PANTHER" id="PTHR31123:SF7">
    <property type="entry name" value="MARVEL DOMAIN-CONTAINING PROTEIN"/>
    <property type="match status" value="1"/>
</dbReference>
<dbReference type="Pfam" id="PF01184">
    <property type="entry name" value="Gpr1_Fun34_YaaH"/>
    <property type="match status" value="1"/>
</dbReference>
<feature type="chain" id="PRO_0000445918" description="Acetate transporter protein patA">
    <location>
        <begin position="1"/>
        <end position="249"/>
    </location>
</feature>
<feature type="transmembrane region" description="Helical" evidence="2">
    <location>
        <begin position="42"/>
        <end position="62"/>
    </location>
</feature>
<feature type="transmembrane region" description="Helical" evidence="2">
    <location>
        <begin position="71"/>
        <end position="91"/>
    </location>
</feature>
<feature type="transmembrane region" description="Helical" evidence="2">
    <location>
        <begin position="106"/>
        <end position="126"/>
    </location>
</feature>
<feature type="transmembrane region" description="Helical" evidence="2">
    <location>
        <begin position="141"/>
        <end position="161"/>
    </location>
</feature>
<feature type="transmembrane region" description="Helical" evidence="2">
    <location>
        <begin position="169"/>
        <end position="189"/>
    </location>
</feature>
<feature type="transmembrane region" description="Helical" evidence="2">
    <location>
        <begin position="202"/>
        <end position="222"/>
    </location>
</feature>
<sequence>MKLSAEGTVMASSEEAAQLSCDTSSSHARNSKEQDFQPTQQIGSPTALGMGAFAIAFTTLSMSLMEWRSAAITNAYIGNCFFTAGMGLVLVAQWELVRGNSFGHTVFGGFGLFNLAFGAINAPAFGVADAFKDDPAALNNAIGYFLLVWGIFVLFFTVAAMPMNLVYTGMLGTSQITYTLLAASYFSFADDHASAGLALKKAAGAFGFVSGLFAWYTVGHLMCQDALLFSFPLGDTSPLYARLQRKKRH</sequence>
<proteinExistence type="evidence at protein level"/>
<organism>
    <name type="scientific">Penicillium expansum</name>
    <name type="common">Blue mold rot fungus</name>
    <dbReference type="NCBI Taxonomy" id="27334"/>
    <lineage>
        <taxon>Eukaryota</taxon>
        <taxon>Fungi</taxon>
        <taxon>Dikarya</taxon>
        <taxon>Ascomycota</taxon>
        <taxon>Pezizomycotina</taxon>
        <taxon>Eurotiomycetes</taxon>
        <taxon>Eurotiomycetidae</taxon>
        <taxon>Eurotiales</taxon>
        <taxon>Aspergillaceae</taxon>
        <taxon>Penicillium</taxon>
    </lineage>
</organism>
<comment type="function">
    <text evidence="1 5 6 9 10">Acetate transporter protein; part of the gene cluster that mediates the biosynthesis of patulin, an acetate-derived tetraketide mycotoxin produced by several fungal species that shows antimicrobial properties against several bacteria (PubMed:25120234, PubMed:25625822, PubMed:30100914, PubMed:30680886). May be involved in the uptake of acetate, a substrate for the synthesis of 6-methylsalicylic acid by the polyketide synthase patK (By similarity).</text>
</comment>
<comment type="pathway">
    <text evidence="10">Mycotoxin biosynthesis; patulin biosynthesis.</text>
</comment>
<comment type="subcellular location">
    <subcellularLocation>
        <location evidence="10">Endoplasmic reticulum membrane</location>
        <topology evidence="10">Multi-pass membrane protein</topology>
    </subcellularLocation>
</comment>
<comment type="induction">
    <text evidence="5 6 8 9 10">Expression is correlated with the production of patulin (PubMed:25120234). Expression is positively regulated by the secondary metabolism regulator laeA (PubMed:27528575, PubMed:30100914). Expression is strongly decreased with increased sucrose concentrations. This decrease is lost in the presence of malic acid (PubMed:30100914). Expression is increased with pH changes from 2.5 to 3.5 in the presence of a limiting concentration of sucrose, 50 mM (PubMed:30100914). Natural phenols present in apple fruits such as chlorogenic acid or the flavonoid epicatechin modulate patulin biosynthesis. They increase expression in the absence of sucrose, have little impact in the presence of 15 mM sucrose, and decrease expression in 175 mM sucrose (PubMed:30100914). Expression is positively regulated by the patulin cluster-specific transcription factor patL (PubMed:25625822). Finally, expression is also positively regulated by the velvet family proteins transcription regulators veA, velB, velC, but not vosA (PubMed:30680886).</text>
</comment>
<comment type="disruption phenotype">
    <text evidence="10">Strongly reduces the production of patulin.</text>
</comment>
<comment type="biotechnology">
    <text evidence="3 4 7">Patulin was originally used as an antibiotic and specifically trialed to be used against the common cold, but it is no longer used for that purpose since it has been shown to induce immunological, neurological and gastrointestinal effects (PubMed:15082620). Genotoxic effects of patulin with dose-dependent increase in DNA strand breaks in brain, liver and kidneys have been detected in mice (PubMed:22222931). However, more recently, it has been proposed that patulin might also have anti-tumor properties (PubMed:26619846).</text>
</comment>
<comment type="similarity">
    <text evidence="12">Belongs to the acetate uptake transporter (AceTr) (TC 2.A.96) family.</text>
</comment>
<name>PATA_PENEN</name>
<evidence type="ECO:0000250" key="1">
    <source>
        <dbReference type="UniProtKB" id="A1CFK8"/>
    </source>
</evidence>
<evidence type="ECO:0000255" key="2"/>
<evidence type="ECO:0000269" key="3">
    <source>
    </source>
</evidence>
<evidence type="ECO:0000269" key="4">
    <source>
    </source>
</evidence>
<evidence type="ECO:0000269" key="5">
    <source>
    </source>
</evidence>
<evidence type="ECO:0000269" key="6">
    <source>
    </source>
</evidence>
<evidence type="ECO:0000269" key="7">
    <source>
    </source>
</evidence>
<evidence type="ECO:0000269" key="8">
    <source>
    </source>
</evidence>
<evidence type="ECO:0000269" key="9">
    <source>
    </source>
</evidence>
<evidence type="ECO:0000269" key="10">
    <source>
    </source>
</evidence>
<evidence type="ECO:0000303" key="11">
    <source>
    </source>
</evidence>
<evidence type="ECO:0000305" key="12"/>
<reference key="1">
    <citation type="journal article" date="2014" name="Int. J. Food Microbiol.">
        <title>Sequencing, physical organization and kinetic expression of the patulin biosynthetic gene cluster from Penicillium expansum.</title>
        <authorList>
            <person name="Tannous J."/>
            <person name="El Khoury R."/>
            <person name="Snini S.P."/>
            <person name="Lippi Y."/>
            <person name="El Khoury A."/>
            <person name="Atoui A."/>
            <person name="Lteif R."/>
            <person name="Oswald I.P."/>
            <person name="Puel O."/>
        </authorList>
    </citation>
    <scope>NUCLEOTIDE SEQUENCE [GENOMIC DNA]</scope>
    <scope>IDENTIFICATION</scope>
    <scope>FUNCTION</scope>
    <scope>INDUCTION</scope>
    <scope>PATHWAY</scope>
    <source>
        <strain>NRRL 35695</strain>
    </source>
</reference>
<reference key="2">
    <citation type="journal article" date="2015" name="Mol. Plant Microbe Interact.">
        <title>Genome, transcriptome, and functional analyses of Penicillium expansum provide new insights into secondary metabolism and pathogenicity.</title>
        <authorList>
            <person name="Ballester A.R."/>
            <person name="Marcet-Houben M."/>
            <person name="Levin E."/>
            <person name="Sela N."/>
            <person name="Selma-Lazaro C."/>
            <person name="Carmona L."/>
            <person name="Wisniewski M."/>
            <person name="Droby S."/>
            <person name="Gonzalez-Candelas L."/>
            <person name="Gabaldon T."/>
        </authorList>
    </citation>
    <scope>NUCLEOTIDE SEQUENCE [LARGE SCALE GENOMIC DNA]</scope>
    <source>
        <strain>MD-8</strain>
    </source>
</reference>
<reference key="3">
    <citation type="journal article" date="2004" name="Int. J. Epidemiol.">
        <title>Clinical trial of patulin in the common cold. 1944.</title>
        <authorList>
            <consortium name="Patulin Clinical Trials Committee, Medical Research Council"/>
        </authorList>
    </citation>
    <scope>BIOTECHNOLOGY</scope>
</reference>
<reference key="4">
    <citation type="journal article" date="2012" name="Food Chem. Toxicol.">
        <title>DNA damage in organs of mice treated acutely with patulin, a known mycotoxin.</title>
        <authorList>
            <person name="de Melo F.T."/>
            <person name="de Oliveira I.M."/>
            <person name="Greggio S."/>
            <person name="Dacosta J.C."/>
            <person name="Guecheva T.N."/>
            <person name="Saffi J."/>
            <person name="Henriques J.A."/>
            <person name="Rosa R.M."/>
        </authorList>
    </citation>
    <scope>BIOTECHNOLOGY</scope>
</reference>
<reference key="5">
    <citation type="journal article" date="2016" name="Tumor Biol.">
        <title>The potential effect of patulin on mice bearing melanoma cells: an anti-tumour or carcinogenic effect?</title>
        <authorList>
            <person name="Boussabbeh M."/>
            <person name="Ben Salem I."/>
            <person name="Rjiba-Touati K."/>
            <person name="Bouyahya C."/>
            <person name="Neffati F."/>
            <person name="Najjar M.F."/>
            <person name="Bacha H."/>
            <person name="Abid-Essefi S."/>
        </authorList>
    </citation>
    <scope>BIOTECHNOLOGY</scope>
</reference>
<reference key="6">
    <citation type="journal article" date="2017" name="Mol. Plant Pathol.">
        <title>LaeA regulation of secondary metabolism modulates virulence in Penicillium expansum and is mediated by sucrose.</title>
        <authorList>
            <person name="Kumar D."/>
            <person name="Barad S."/>
            <person name="Chen Y."/>
            <person name="Luo X."/>
            <person name="Tannous J."/>
            <person name="Dubey A."/>
            <person name="Glam Matana N."/>
            <person name="Tian S."/>
            <person name="Li B."/>
            <person name="Keller N."/>
            <person name="Prusky D."/>
        </authorList>
    </citation>
    <scope>INDUCTION</scope>
</reference>
<reference key="7">
    <citation type="journal article" date="2018" name="Front. Plant Sci.">
        <title>Apple intrinsic factors modulating the global regulator, LaeA, the patulin gene cluster and patulin accumulation during fruit colonization by Penicillium expansum.</title>
        <authorList>
            <person name="Kumar D."/>
            <person name="Tannous J."/>
            <person name="Sionov E."/>
            <person name="Keller N."/>
            <person name="Prusky D."/>
        </authorList>
    </citation>
    <scope>FUNCTION</scope>
    <scope>INDUCTION</scope>
</reference>
<reference key="8">
    <citation type="journal article" date="2015" name="Mol. Plant Microbe Interact.">
        <title>Genomic characterization reveals insights into patulin biosynthesis and pathogenicity in Penicillium species.</title>
        <authorList>
            <person name="Li B."/>
            <person name="Zong Y."/>
            <person name="Du Z."/>
            <person name="Chen Y."/>
            <person name="Zhang Z."/>
            <person name="Qin G."/>
            <person name="Zhao W."/>
            <person name="Tian S."/>
        </authorList>
    </citation>
    <scope>FUNCTION</scope>
    <scope>INDUCTION</scope>
</reference>
<reference key="9">
    <citation type="journal article" date="2019" name="Environ. Microbiol.">
        <title>Dissection of patulin biosynthesis, spatial control and regulation mechanism in Penicillium expansum.</title>
        <authorList>
            <person name="Li B."/>
            <person name="Chen Y."/>
            <person name="Zong Y."/>
            <person name="Shang Y."/>
            <person name="Zhang Z."/>
            <person name="Xu X."/>
            <person name="Wang X."/>
            <person name="Long M."/>
            <person name="Tian S."/>
        </authorList>
    </citation>
    <scope>FUNCTION</scope>
    <scope>DISRUPTION PHENOTYPE</scope>
    <scope>SUBCELLULAR LOCATION</scope>
    <scope>INDUCTION</scope>
    <scope>PATHWAY</scope>
</reference>
<accession>A0A075TRL0</accession>
<keyword id="KW-0256">Endoplasmic reticulum</keyword>
<keyword id="KW-0472">Membrane</keyword>
<keyword id="KW-1185">Reference proteome</keyword>
<keyword id="KW-0812">Transmembrane</keyword>
<keyword id="KW-1133">Transmembrane helix</keyword>
<gene>
    <name evidence="11" type="primary">patA</name>
    <name type="ORF">PEX2_082810</name>
</gene>